<organism>
    <name type="scientific">Zea mays</name>
    <name type="common">Maize</name>
    <dbReference type="NCBI Taxonomy" id="4577"/>
    <lineage>
        <taxon>Eukaryota</taxon>
        <taxon>Viridiplantae</taxon>
        <taxon>Streptophyta</taxon>
        <taxon>Embryophyta</taxon>
        <taxon>Tracheophyta</taxon>
        <taxon>Spermatophyta</taxon>
        <taxon>Magnoliopsida</taxon>
        <taxon>Liliopsida</taxon>
        <taxon>Poales</taxon>
        <taxon>Poaceae</taxon>
        <taxon>PACMAD clade</taxon>
        <taxon>Panicoideae</taxon>
        <taxon>Andropogonodae</taxon>
        <taxon>Andropogoneae</taxon>
        <taxon>Tripsacinae</taxon>
        <taxon>Zea</taxon>
    </lineage>
</organism>
<dbReference type="EC" id="3.2.2.22"/>
<dbReference type="EMBL" id="M77122">
    <property type="protein sequence ID" value="AAA33508.1"/>
    <property type="molecule type" value="mRNA"/>
</dbReference>
<dbReference type="PIR" id="A41590">
    <property type="entry name" value="RLZMRI"/>
</dbReference>
<dbReference type="PDB" id="2K6H">
    <property type="method" value="NMR"/>
    <property type="chains" value="A=17-162, A=190-288"/>
</dbReference>
<dbReference type="PDB" id="2PQI">
    <property type="method" value="X-ray"/>
    <property type="resolution" value="2.50 A"/>
    <property type="chains" value="A/B/C=22-162, A/B/C=190-288"/>
</dbReference>
<dbReference type="PDB" id="2PQJ">
    <property type="method" value="X-ray"/>
    <property type="resolution" value="2.80 A"/>
    <property type="chains" value="A/B/C=22-162, A/B/C=190-288"/>
</dbReference>
<dbReference type="PDBsum" id="2K6H"/>
<dbReference type="PDBsum" id="2PQI"/>
<dbReference type="PDBsum" id="2PQJ"/>
<dbReference type="SMR" id="P28522"/>
<dbReference type="FunCoup" id="P28522">
    <property type="interactions" value="12"/>
</dbReference>
<dbReference type="STRING" id="4577.P28522"/>
<dbReference type="MaizeGDB" id="30000"/>
<dbReference type="eggNOG" id="ENOG502S89M">
    <property type="taxonomic scope" value="Eukaryota"/>
</dbReference>
<dbReference type="InParanoid" id="P28522"/>
<dbReference type="EvolutionaryTrace" id="P28522"/>
<dbReference type="Proteomes" id="UP000007305">
    <property type="component" value="Unplaced"/>
</dbReference>
<dbReference type="ExpressionAtlas" id="P28522">
    <property type="expression patterns" value="baseline and differential"/>
</dbReference>
<dbReference type="GO" id="GO:0030598">
    <property type="term" value="F:rRNA N-glycosylase activity"/>
    <property type="evidence" value="ECO:0007669"/>
    <property type="project" value="UniProtKB-EC"/>
</dbReference>
<dbReference type="GO" id="GO:0090729">
    <property type="term" value="F:toxin activity"/>
    <property type="evidence" value="ECO:0007669"/>
    <property type="project" value="UniProtKB-KW"/>
</dbReference>
<dbReference type="GO" id="GO:0006952">
    <property type="term" value="P:defense response"/>
    <property type="evidence" value="ECO:0007669"/>
    <property type="project" value="UniProtKB-KW"/>
</dbReference>
<dbReference type="GO" id="GO:0017148">
    <property type="term" value="P:negative regulation of translation"/>
    <property type="evidence" value="ECO:0007669"/>
    <property type="project" value="UniProtKB-KW"/>
</dbReference>
<dbReference type="Gene3D" id="3.40.420.10">
    <property type="entry name" value="Ricin (A subunit), domain 1"/>
    <property type="match status" value="1"/>
</dbReference>
<dbReference type="Gene3D" id="4.10.470.10">
    <property type="entry name" value="Ricin (A Subunit), domain 2"/>
    <property type="match status" value="1"/>
</dbReference>
<dbReference type="InterPro" id="IPR036041">
    <property type="entry name" value="Ribosome-inact_prot_sf"/>
</dbReference>
<dbReference type="InterPro" id="IPR017989">
    <property type="entry name" value="Ribosome_inactivat_1/2"/>
</dbReference>
<dbReference type="InterPro" id="IPR001574">
    <property type="entry name" value="Ribosome_inactivat_prot"/>
</dbReference>
<dbReference type="InterPro" id="IPR017988">
    <property type="entry name" value="Ribosome_inactivat_prot_CS"/>
</dbReference>
<dbReference type="InterPro" id="IPR016138">
    <property type="entry name" value="Ribosome_inactivat_prot_sub1"/>
</dbReference>
<dbReference type="InterPro" id="IPR016139">
    <property type="entry name" value="Ribosome_inactivat_prot_sub2"/>
</dbReference>
<dbReference type="PANTHER" id="PTHR33453">
    <property type="match status" value="1"/>
</dbReference>
<dbReference type="PANTHER" id="PTHR33453:SF9">
    <property type="entry name" value="ALBUMIN B-32"/>
    <property type="match status" value="1"/>
</dbReference>
<dbReference type="Pfam" id="PF00161">
    <property type="entry name" value="RIP"/>
    <property type="match status" value="1"/>
</dbReference>
<dbReference type="PRINTS" id="PR00396">
    <property type="entry name" value="SHIGARICIN"/>
</dbReference>
<dbReference type="SUPFAM" id="SSF56371">
    <property type="entry name" value="Ribosome inactivating proteins (RIP)"/>
    <property type="match status" value="1"/>
</dbReference>
<dbReference type="PROSITE" id="PS00275">
    <property type="entry name" value="SHIGA_RICIN"/>
    <property type="match status" value="1"/>
</dbReference>
<keyword id="KW-0002">3D-structure</keyword>
<keyword id="KW-0165">Cleavage on pair of basic residues</keyword>
<keyword id="KW-0903">Direct protein sequencing</keyword>
<keyword id="KW-0378">Hydrolase</keyword>
<keyword id="KW-0611">Plant defense</keyword>
<keyword id="KW-0652">Protein synthesis inhibitor</keyword>
<keyword id="KW-1185">Reference proteome</keyword>
<keyword id="KW-0800">Toxin</keyword>
<keyword id="KW-0865">Zymogen</keyword>
<feature type="propeptide" id="PRO_0000030758" description="Or 12 (in 10% of the molecules)">
    <location>
        <begin position="1"/>
        <end position="16"/>
    </location>
</feature>
<feature type="chain" id="PRO_0000030759" description="Ribosome-inactivating protein alpha chain">
    <location>
        <begin position="17"/>
        <end position="161"/>
    </location>
</feature>
<feature type="propeptide" id="PRO_0000030760" evidence="2">
    <location>
        <begin position="162"/>
        <end position="186"/>
    </location>
</feature>
<feature type="chain" id="PRO_0000030761" description="Ribosome-inactivating protein beta chain">
    <location>
        <begin position="187"/>
        <end position="257" status="uncertain"/>
    </location>
</feature>
<feature type="propeptide" id="PRO_0000030762">
    <location>
        <begin position="258" status="uncertain"/>
        <end position="301"/>
    </location>
</feature>
<feature type="active site" evidence="1">
    <location>
        <position position="207"/>
    </location>
</feature>
<feature type="strand" evidence="5">
    <location>
        <begin position="27"/>
        <end position="30"/>
    </location>
</feature>
<feature type="helix" evidence="5">
    <location>
        <begin position="36"/>
        <end position="48"/>
    </location>
</feature>
<feature type="strand" evidence="4">
    <location>
        <begin position="51"/>
        <end position="54"/>
    </location>
</feature>
<feature type="strand" evidence="4">
    <location>
        <begin position="57"/>
        <end position="61"/>
    </location>
</feature>
<feature type="strand" evidence="5">
    <location>
        <begin position="72"/>
        <end position="78"/>
    </location>
</feature>
<feature type="strand" evidence="5">
    <location>
        <begin position="83"/>
        <end position="89"/>
    </location>
</feature>
<feature type="helix" evidence="5">
    <location>
        <begin position="90"/>
        <end position="92"/>
    </location>
</feature>
<feature type="strand" evidence="5">
    <location>
        <begin position="94"/>
        <end position="99"/>
    </location>
</feature>
<feature type="turn" evidence="4">
    <location>
        <begin position="101"/>
        <end position="103"/>
    </location>
</feature>
<feature type="strand" evidence="5">
    <location>
        <begin position="105"/>
        <end position="109"/>
    </location>
</feature>
<feature type="helix" evidence="4">
    <location>
        <begin position="115"/>
        <end position="117"/>
    </location>
</feature>
<feature type="helix" evidence="5">
    <location>
        <begin position="130"/>
        <end position="134"/>
    </location>
</feature>
<feature type="strand" evidence="4">
    <location>
        <begin position="135"/>
        <end position="137"/>
    </location>
</feature>
<feature type="helix" evidence="5">
    <location>
        <begin position="139"/>
        <end position="141"/>
    </location>
</feature>
<feature type="strand" evidence="4">
    <location>
        <begin position="142"/>
        <end position="145"/>
    </location>
</feature>
<feature type="helix" evidence="5">
    <location>
        <begin position="146"/>
        <end position="157"/>
    </location>
</feature>
<feature type="helix" evidence="5">
    <location>
        <begin position="194"/>
        <end position="204"/>
    </location>
</feature>
<feature type="helix" evidence="5">
    <location>
        <begin position="206"/>
        <end position="210"/>
    </location>
</feature>
<feature type="helix" evidence="5">
    <location>
        <begin position="212"/>
        <end position="220"/>
    </location>
</feature>
<feature type="turn" evidence="5">
    <location>
        <begin position="221"/>
        <end position="223"/>
    </location>
</feature>
<feature type="strand" evidence="4">
    <location>
        <begin position="224"/>
        <end position="226"/>
    </location>
</feature>
<feature type="helix" evidence="5">
    <location>
        <begin position="232"/>
        <end position="238"/>
    </location>
</feature>
<feature type="helix" evidence="5">
    <location>
        <begin position="241"/>
        <end position="253"/>
    </location>
</feature>
<feature type="helix" evidence="5">
    <location>
        <begin position="260"/>
        <end position="263"/>
    </location>
</feature>
<feature type="turn" evidence="5">
    <location>
        <begin position="264"/>
        <end position="266"/>
    </location>
</feature>
<feature type="helix" evidence="5">
    <location>
        <begin position="270"/>
        <end position="276"/>
    </location>
</feature>
<feature type="strand" evidence="5">
    <location>
        <begin position="277"/>
        <end position="280"/>
    </location>
</feature>
<accession>P28522</accession>
<sequence>MAEITLEPSDLMAQTNKRIVPKFTEIFPVEDANYPYSAFIASVRKDVIKHCTDHKGIFQPVLPPEKKVPELWFYTELKTRTSSITLAIRMDNLYLVGFRTPGGVWWEFGKDGDTHLLGDNPRWLGFGGRYQDLIGNKGLETVTMGRAEMTRAVNDLAKKKKMATLEEEEVKMQMQMPEAADLAAAAAADPQADTKSKLVKLVVMVCEGLRFNTVSRTVDAGFNSQHGVTLTVTQGKQVQKWDRISKAAFEWADHPTAVIPDMQKLGIKDKNEAARIVALVKNQTTAAAATAASADNDDDEA</sequence>
<proteinExistence type="evidence at protein level"/>
<evidence type="ECO:0000250" key="1"/>
<evidence type="ECO:0000269" key="2">
    <source>
    </source>
</evidence>
<evidence type="ECO:0000305" key="3"/>
<evidence type="ECO:0007829" key="4">
    <source>
        <dbReference type="PDB" id="2K6H"/>
    </source>
</evidence>
<evidence type="ECO:0007829" key="5">
    <source>
        <dbReference type="PDB" id="2PQI"/>
    </source>
</evidence>
<comment type="function">
    <text>Potent catalytic inactivator of eukaryotic protein synthesis. It may be a component of natural defense mechanisms involved in protecting the kernel against soil-borne fungal infections.</text>
</comment>
<comment type="catalytic activity">
    <reaction>
        <text>Endohydrolysis of the N-glycosidic bond at one specific adenosine on the 28S rRNA.</text>
        <dbReference type="EC" id="3.2.2.22"/>
    </reaction>
</comment>
<comment type="subunit">
    <text>Synthesized and stored in the kernel as a 34 kDa inactive precursor. During germination, this neutral precursor is converted into a basic, active form by limited proteolysis, which removes 25 AA of net charge -6 from the center of the polypeptide chain. Additional processing also occurs at the N- and C-termini of the polypeptide. A two-chain active RIP (comprised of 16.5 and 8.5 kDa fragments that remain tightly associated) is produced from this processing event.</text>
</comment>
<comment type="similarity">
    <text evidence="3">Belongs to the ribosome-inactivating protein family. Type 1 RIP subfamily.</text>
</comment>
<name>RIPX_MAIZE</name>
<protein>
    <recommendedName>
        <fullName>Ribosome-inactivating protein</fullName>
        <ecNumber>3.2.2.22</ecNumber>
    </recommendedName>
    <alternativeName>
        <fullName>rRNA N-glycosidase</fullName>
    </alternativeName>
    <component>
        <recommendedName>
            <fullName>Ribosome-inactivating protein alpha chain</fullName>
        </recommendedName>
    </component>
    <component>
        <recommendedName>
            <fullName>Ribosome-inactivating protein beta chain</fullName>
        </recommendedName>
    </component>
</protein>
<reference key="1">
    <citation type="journal article" date="1991" name="J. Biol. Chem.">
        <title>Characterization and molecular cloning of a proenzyme form of a ribosome-inactivating protein from maize. Novel mechanism of proenzyme activation by proteolytic removal of a 2.8-kilodalton internal peptide segment.</title>
        <authorList>
            <person name="Walsh T.A."/>
            <person name="Morgan A.E."/>
            <person name="Hey T.D."/>
        </authorList>
    </citation>
    <scope>NUCLEOTIDE SEQUENCE [MRNA]</scope>
    <scope>PROTEIN SEQUENCE OF 13-49; 155-161 AND 187-215</scope>
</reference>